<sequence length="366" mass="38895">MSGNTLGTLFTVTTFGESHGPAIGCVIDGCPPGMSLAEADIQLELDRRKPGTSRHVTQRQEEDKVEILSGVFEGKTTGAPIALLIRNTDQRSKDYGNIADTFRPGHADYTYWQKFGIRDYRGGGRSSARLTAPTVAAGAVAKKWLREKFGTEIRGYMAALGEIDVPFIDWQFVRENPFFVPNADVVPQLEAYMDALRKDGDSIGARINVVASGVPVGLGEPLFDRLDADIAHAMMGINAVKGVEIGAGFASVAQRGSVHGDELTPEGFVGNHAGGVLGGISTGQDITVSIAIKPTSSIRTPRRSIDKNGQPAVVETFGRHDPCVGIRATPIAEAMLALVLIDHALRHRAQCGDVVVGTPKIAASAP</sequence>
<organism>
    <name type="scientific">Paraburkholderia phymatum (strain DSM 17167 / CIP 108236 / LMG 21445 / STM815)</name>
    <name type="common">Burkholderia phymatum</name>
    <dbReference type="NCBI Taxonomy" id="391038"/>
    <lineage>
        <taxon>Bacteria</taxon>
        <taxon>Pseudomonadati</taxon>
        <taxon>Pseudomonadota</taxon>
        <taxon>Betaproteobacteria</taxon>
        <taxon>Burkholderiales</taxon>
        <taxon>Burkholderiaceae</taxon>
        <taxon>Paraburkholderia</taxon>
    </lineage>
</organism>
<name>AROC_PARP8</name>
<reference key="1">
    <citation type="journal article" date="2014" name="Stand. Genomic Sci.">
        <title>Complete genome sequence of Burkholderia phymatum STM815(T), a broad host range and efficient nitrogen-fixing symbiont of Mimosa species.</title>
        <authorList>
            <person name="Moulin L."/>
            <person name="Klonowska A."/>
            <person name="Caroline B."/>
            <person name="Booth K."/>
            <person name="Vriezen J.A."/>
            <person name="Melkonian R."/>
            <person name="James E.K."/>
            <person name="Young J.P."/>
            <person name="Bena G."/>
            <person name="Hauser L."/>
            <person name="Land M."/>
            <person name="Kyrpides N."/>
            <person name="Bruce D."/>
            <person name="Chain P."/>
            <person name="Copeland A."/>
            <person name="Pitluck S."/>
            <person name="Woyke T."/>
            <person name="Lizotte-Waniewski M."/>
            <person name="Bristow J."/>
            <person name="Riley M."/>
        </authorList>
    </citation>
    <scope>NUCLEOTIDE SEQUENCE [LARGE SCALE GENOMIC DNA]</scope>
    <source>
        <strain>DSM 17167 / CIP 108236 / LMG 21445 / STM815</strain>
    </source>
</reference>
<proteinExistence type="inferred from homology"/>
<gene>
    <name evidence="1" type="primary">aroC</name>
    <name type="ordered locus">Bphy_1569</name>
</gene>
<dbReference type="EC" id="4.2.3.5" evidence="1"/>
<dbReference type="EMBL" id="CP001043">
    <property type="protein sequence ID" value="ACC70751.1"/>
    <property type="molecule type" value="Genomic_DNA"/>
</dbReference>
<dbReference type="RefSeq" id="WP_012400961.1">
    <property type="nucleotide sequence ID" value="NC_010622.1"/>
</dbReference>
<dbReference type="SMR" id="B2JK28"/>
<dbReference type="STRING" id="391038.Bphy_1569"/>
<dbReference type="KEGG" id="bph:Bphy_1569"/>
<dbReference type="eggNOG" id="COG0082">
    <property type="taxonomic scope" value="Bacteria"/>
</dbReference>
<dbReference type="HOGENOM" id="CLU_034547_0_2_4"/>
<dbReference type="OrthoDB" id="9771806at2"/>
<dbReference type="UniPathway" id="UPA00053">
    <property type="reaction ID" value="UER00090"/>
</dbReference>
<dbReference type="Proteomes" id="UP000001192">
    <property type="component" value="Chromosome 1"/>
</dbReference>
<dbReference type="GO" id="GO:0005829">
    <property type="term" value="C:cytosol"/>
    <property type="evidence" value="ECO:0007669"/>
    <property type="project" value="TreeGrafter"/>
</dbReference>
<dbReference type="GO" id="GO:0004107">
    <property type="term" value="F:chorismate synthase activity"/>
    <property type="evidence" value="ECO:0007669"/>
    <property type="project" value="UniProtKB-UniRule"/>
</dbReference>
<dbReference type="GO" id="GO:0010181">
    <property type="term" value="F:FMN binding"/>
    <property type="evidence" value="ECO:0007669"/>
    <property type="project" value="TreeGrafter"/>
</dbReference>
<dbReference type="GO" id="GO:0008652">
    <property type="term" value="P:amino acid biosynthetic process"/>
    <property type="evidence" value="ECO:0007669"/>
    <property type="project" value="UniProtKB-KW"/>
</dbReference>
<dbReference type="GO" id="GO:0009073">
    <property type="term" value="P:aromatic amino acid family biosynthetic process"/>
    <property type="evidence" value="ECO:0007669"/>
    <property type="project" value="UniProtKB-KW"/>
</dbReference>
<dbReference type="GO" id="GO:0009423">
    <property type="term" value="P:chorismate biosynthetic process"/>
    <property type="evidence" value="ECO:0007669"/>
    <property type="project" value="UniProtKB-UniRule"/>
</dbReference>
<dbReference type="CDD" id="cd07304">
    <property type="entry name" value="Chorismate_synthase"/>
    <property type="match status" value="1"/>
</dbReference>
<dbReference type="FunFam" id="3.60.150.10:FF:000001">
    <property type="entry name" value="Chorismate synthase"/>
    <property type="match status" value="1"/>
</dbReference>
<dbReference type="Gene3D" id="3.60.150.10">
    <property type="entry name" value="Chorismate synthase AroC"/>
    <property type="match status" value="1"/>
</dbReference>
<dbReference type="HAMAP" id="MF_00300">
    <property type="entry name" value="Chorismate_synth"/>
    <property type="match status" value="1"/>
</dbReference>
<dbReference type="InterPro" id="IPR000453">
    <property type="entry name" value="Chorismate_synth"/>
</dbReference>
<dbReference type="InterPro" id="IPR035904">
    <property type="entry name" value="Chorismate_synth_AroC_sf"/>
</dbReference>
<dbReference type="InterPro" id="IPR020541">
    <property type="entry name" value="Chorismate_synthase_CS"/>
</dbReference>
<dbReference type="NCBIfam" id="TIGR00033">
    <property type="entry name" value="aroC"/>
    <property type="match status" value="1"/>
</dbReference>
<dbReference type="NCBIfam" id="NF003793">
    <property type="entry name" value="PRK05382.1"/>
    <property type="match status" value="1"/>
</dbReference>
<dbReference type="PANTHER" id="PTHR21085">
    <property type="entry name" value="CHORISMATE SYNTHASE"/>
    <property type="match status" value="1"/>
</dbReference>
<dbReference type="PANTHER" id="PTHR21085:SF0">
    <property type="entry name" value="CHORISMATE SYNTHASE"/>
    <property type="match status" value="1"/>
</dbReference>
<dbReference type="Pfam" id="PF01264">
    <property type="entry name" value="Chorismate_synt"/>
    <property type="match status" value="1"/>
</dbReference>
<dbReference type="PIRSF" id="PIRSF001456">
    <property type="entry name" value="Chorismate_synth"/>
    <property type="match status" value="1"/>
</dbReference>
<dbReference type="SUPFAM" id="SSF103263">
    <property type="entry name" value="Chorismate synthase, AroC"/>
    <property type="match status" value="1"/>
</dbReference>
<dbReference type="PROSITE" id="PS00787">
    <property type="entry name" value="CHORISMATE_SYNTHASE_1"/>
    <property type="match status" value="1"/>
</dbReference>
<dbReference type="PROSITE" id="PS00788">
    <property type="entry name" value="CHORISMATE_SYNTHASE_2"/>
    <property type="match status" value="1"/>
</dbReference>
<dbReference type="PROSITE" id="PS00789">
    <property type="entry name" value="CHORISMATE_SYNTHASE_3"/>
    <property type="match status" value="1"/>
</dbReference>
<protein>
    <recommendedName>
        <fullName evidence="1">Chorismate synthase</fullName>
        <shortName evidence="1">CS</shortName>
        <ecNumber evidence="1">4.2.3.5</ecNumber>
    </recommendedName>
    <alternativeName>
        <fullName evidence="1">5-enolpyruvylshikimate-3-phosphate phospholyase</fullName>
    </alternativeName>
</protein>
<accession>B2JK28</accession>
<keyword id="KW-0028">Amino-acid biosynthesis</keyword>
<keyword id="KW-0057">Aromatic amino acid biosynthesis</keyword>
<keyword id="KW-0274">FAD</keyword>
<keyword id="KW-0285">Flavoprotein</keyword>
<keyword id="KW-0288">FMN</keyword>
<keyword id="KW-0456">Lyase</keyword>
<keyword id="KW-0521">NADP</keyword>
<keyword id="KW-1185">Reference proteome</keyword>
<comment type="function">
    <text evidence="1">Catalyzes the anti-1,4-elimination of the C-3 phosphate and the C-6 proR hydrogen from 5-enolpyruvylshikimate-3-phosphate (EPSP) to yield chorismate, which is the branch point compound that serves as the starting substrate for the three terminal pathways of aromatic amino acid biosynthesis. This reaction introduces a second double bond into the aromatic ring system.</text>
</comment>
<comment type="catalytic activity">
    <reaction evidence="1">
        <text>5-O-(1-carboxyvinyl)-3-phosphoshikimate = chorismate + phosphate</text>
        <dbReference type="Rhea" id="RHEA:21020"/>
        <dbReference type="ChEBI" id="CHEBI:29748"/>
        <dbReference type="ChEBI" id="CHEBI:43474"/>
        <dbReference type="ChEBI" id="CHEBI:57701"/>
        <dbReference type="EC" id="4.2.3.5"/>
    </reaction>
</comment>
<comment type="cofactor">
    <cofactor evidence="1">
        <name>FMNH2</name>
        <dbReference type="ChEBI" id="CHEBI:57618"/>
    </cofactor>
    <text evidence="1">Reduced FMN (FMNH(2)).</text>
</comment>
<comment type="pathway">
    <text evidence="1">Metabolic intermediate biosynthesis; chorismate biosynthesis; chorismate from D-erythrose 4-phosphate and phosphoenolpyruvate: step 7/7.</text>
</comment>
<comment type="subunit">
    <text evidence="1">Homotetramer.</text>
</comment>
<comment type="similarity">
    <text evidence="1">Belongs to the chorismate synthase family.</text>
</comment>
<feature type="chain" id="PRO_1000115336" description="Chorismate synthase">
    <location>
        <begin position="1"/>
        <end position="366"/>
    </location>
</feature>
<feature type="binding site" evidence="1">
    <location>
        <position position="48"/>
    </location>
    <ligand>
        <name>NADP(+)</name>
        <dbReference type="ChEBI" id="CHEBI:58349"/>
    </ligand>
</feature>
<feature type="binding site" evidence="1">
    <location>
        <position position="54"/>
    </location>
    <ligand>
        <name>NADP(+)</name>
        <dbReference type="ChEBI" id="CHEBI:58349"/>
    </ligand>
</feature>
<feature type="binding site" evidence="1">
    <location>
        <begin position="125"/>
        <end position="127"/>
    </location>
    <ligand>
        <name>FMN</name>
        <dbReference type="ChEBI" id="CHEBI:58210"/>
    </ligand>
</feature>
<feature type="binding site" evidence="1">
    <location>
        <begin position="238"/>
        <end position="239"/>
    </location>
    <ligand>
        <name>FMN</name>
        <dbReference type="ChEBI" id="CHEBI:58210"/>
    </ligand>
</feature>
<feature type="binding site" evidence="1">
    <location>
        <position position="278"/>
    </location>
    <ligand>
        <name>FMN</name>
        <dbReference type="ChEBI" id="CHEBI:58210"/>
    </ligand>
</feature>
<feature type="binding site" evidence="1">
    <location>
        <begin position="293"/>
        <end position="297"/>
    </location>
    <ligand>
        <name>FMN</name>
        <dbReference type="ChEBI" id="CHEBI:58210"/>
    </ligand>
</feature>
<feature type="binding site" evidence="1">
    <location>
        <position position="319"/>
    </location>
    <ligand>
        <name>FMN</name>
        <dbReference type="ChEBI" id="CHEBI:58210"/>
    </ligand>
</feature>
<evidence type="ECO:0000255" key="1">
    <source>
        <dbReference type="HAMAP-Rule" id="MF_00300"/>
    </source>
</evidence>